<accession>A5FZX8</accession>
<gene>
    <name evidence="1" type="primary">gltX1</name>
    <name type="ordered locus">Acry_1959</name>
</gene>
<comment type="function">
    <text evidence="1">Catalyzes the attachment of glutamate to tRNA(Glu) in a two-step reaction: glutamate is first activated by ATP to form Glu-AMP and then transferred to the acceptor end of tRNA(Glu).</text>
</comment>
<comment type="catalytic activity">
    <reaction evidence="1">
        <text>tRNA(Glu) + L-glutamate + ATP = L-glutamyl-tRNA(Glu) + AMP + diphosphate</text>
        <dbReference type="Rhea" id="RHEA:23540"/>
        <dbReference type="Rhea" id="RHEA-COMP:9663"/>
        <dbReference type="Rhea" id="RHEA-COMP:9680"/>
        <dbReference type="ChEBI" id="CHEBI:29985"/>
        <dbReference type="ChEBI" id="CHEBI:30616"/>
        <dbReference type="ChEBI" id="CHEBI:33019"/>
        <dbReference type="ChEBI" id="CHEBI:78442"/>
        <dbReference type="ChEBI" id="CHEBI:78520"/>
        <dbReference type="ChEBI" id="CHEBI:456215"/>
        <dbReference type="EC" id="6.1.1.17"/>
    </reaction>
</comment>
<comment type="subunit">
    <text evidence="1">Monomer.</text>
</comment>
<comment type="subcellular location">
    <subcellularLocation>
        <location evidence="1">Cytoplasm</location>
    </subcellularLocation>
</comment>
<comment type="similarity">
    <text evidence="1">Belongs to the class-I aminoacyl-tRNA synthetase family. Glutamate--tRNA ligase type 1 subfamily.</text>
</comment>
<evidence type="ECO:0000255" key="1">
    <source>
        <dbReference type="HAMAP-Rule" id="MF_00022"/>
    </source>
</evidence>
<protein>
    <recommendedName>
        <fullName evidence="1">Glutamate--tRNA ligase 1</fullName>
        <ecNumber evidence="1">6.1.1.17</ecNumber>
    </recommendedName>
    <alternativeName>
        <fullName evidence="1">Glutamyl-tRNA synthetase 1</fullName>
        <shortName evidence="1">GluRS 1</shortName>
    </alternativeName>
</protein>
<sequence>MTIRVRFAPSPTGMLHIGGARTALFNYLFARHHGGQFLLRVEDTDRERSTPEATKVILDALDWLDLKPDEPPVYQSTRYARHREVAEQMLAAGQAYRCYCSREELAEMRAEAERSKKPFRYDGRWRDRDPAEAPAGVDPVIRLRAPREGETVIHDLVQGEVRVKNAELDDMILLRSDGTPTYLHAVVVDDHDMGITHVIRGDDHLTNTFRQAQIYDAMGWARPNFAHIPLIHGADGAKLSKRHGAVSVLQFRDEGYLPEALCNYLLRLGWGHGDAEILPREEQVALFDLDGVGRAASRMDYAKLLHVNAVFLRAAEDERLAADVVARLERDHGFPVSTEAAGRIAMLMPGLKDRARTLAELAESALFVVREAPLPMTEKAEALLTEAARDDLAALLLDFDKTDFSKAALHEAMKAYAEREEKKLGAIAQPLRAALTGSTVSPPIDAVMEALGPIEVRKRIFSVLGE</sequence>
<proteinExistence type="inferred from homology"/>
<keyword id="KW-0030">Aminoacyl-tRNA synthetase</keyword>
<keyword id="KW-0067">ATP-binding</keyword>
<keyword id="KW-0963">Cytoplasm</keyword>
<keyword id="KW-0436">Ligase</keyword>
<keyword id="KW-0547">Nucleotide-binding</keyword>
<keyword id="KW-0648">Protein biosynthesis</keyword>
<keyword id="KW-1185">Reference proteome</keyword>
<feature type="chain" id="PRO_0000367595" description="Glutamate--tRNA ligase 1">
    <location>
        <begin position="1"/>
        <end position="466"/>
    </location>
</feature>
<feature type="short sequence motif" description="'HIGH' region" evidence="1">
    <location>
        <begin position="9"/>
        <end position="19"/>
    </location>
</feature>
<feature type="short sequence motif" description="'KMSKS' region" evidence="1">
    <location>
        <begin position="238"/>
        <end position="242"/>
    </location>
</feature>
<feature type="binding site" evidence="1">
    <location>
        <position position="241"/>
    </location>
    <ligand>
        <name>ATP</name>
        <dbReference type="ChEBI" id="CHEBI:30616"/>
    </ligand>
</feature>
<dbReference type="EC" id="6.1.1.17" evidence="1"/>
<dbReference type="EMBL" id="CP000697">
    <property type="protein sequence ID" value="ABQ31160.1"/>
    <property type="molecule type" value="Genomic_DNA"/>
</dbReference>
<dbReference type="SMR" id="A5FZX8"/>
<dbReference type="STRING" id="349163.Acry_1959"/>
<dbReference type="KEGG" id="acr:Acry_1959"/>
<dbReference type="eggNOG" id="COG0008">
    <property type="taxonomic scope" value="Bacteria"/>
</dbReference>
<dbReference type="HOGENOM" id="CLU_015768_6_0_5"/>
<dbReference type="Proteomes" id="UP000000245">
    <property type="component" value="Chromosome"/>
</dbReference>
<dbReference type="GO" id="GO:0005829">
    <property type="term" value="C:cytosol"/>
    <property type="evidence" value="ECO:0007669"/>
    <property type="project" value="TreeGrafter"/>
</dbReference>
<dbReference type="GO" id="GO:0005524">
    <property type="term" value="F:ATP binding"/>
    <property type="evidence" value="ECO:0007669"/>
    <property type="project" value="UniProtKB-UniRule"/>
</dbReference>
<dbReference type="GO" id="GO:0004818">
    <property type="term" value="F:glutamate-tRNA ligase activity"/>
    <property type="evidence" value="ECO:0007669"/>
    <property type="project" value="UniProtKB-UniRule"/>
</dbReference>
<dbReference type="GO" id="GO:0000049">
    <property type="term" value="F:tRNA binding"/>
    <property type="evidence" value="ECO:0007669"/>
    <property type="project" value="InterPro"/>
</dbReference>
<dbReference type="GO" id="GO:0008270">
    <property type="term" value="F:zinc ion binding"/>
    <property type="evidence" value="ECO:0007669"/>
    <property type="project" value="InterPro"/>
</dbReference>
<dbReference type="GO" id="GO:0006424">
    <property type="term" value="P:glutamyl-tRNA aminoacylation"/>
    <property type="evidence" value="ECO:0007669"/>
    <property type="project" value="UniProtKB-UniRule"/>
</dbReference>
<dbReference type="CDD" id="cd00808">
    <property type="entry name" value="GluRS_core"/>
    <property type="match status" value="1"/>
</dbReference>
<dbReference type="FunFam" id="3.40.50.620:FF:000007">
    <property type="entry name" value="Glutamate--tRNA ligase"/>
    <property type="match status" value="1"/>
</dbReference>
<dbReference type="Gene3D" id="1.10.10.350">
    <property type="match status" value="1"/>
</dbReference>
<dbReference type="Gene3D" id="3.40.50.620">
    <property type="entry name" value="HUPs"/>
    <property type="match status" value="1"/>
</dbReference>
<dbReference type="HAMAP" id="MF_00022">
    <property type="entry name" value="Glu_tRNA_synth_type1"/>
    <property type="match status" value="1"/>
</dbReference>
<dbReference type="InterPro" id="IPR045462">
    <property type="entry name" value="aa-tRNA-synth_I_cd-bd"/>
</dbReference>
<dbReference type="InterPro" id="IPR020751">
    <property type="entry name" value="aa-tRNA-synth_I_codon-bd_sub2"/>
</dbReference>
<dbReference type="InterPro" id="IPR001412">
    <property type="entry name" value="aa-tRNA-synth_I_CS"/>
</dbReference>
<dbReference type="InterPro" id="IPR008925">
    <property type="entry name" value="aa_tRNA-synth_I_cd-bd_sf"/>
</dbReference>
<dbReference type="InterPro" id="IPR004527">
    <property type="entry name" value="Glu-tRNA-ligase_bac/mito"/>
</dbReference>
<dbReference type="InterPro" id="IPR000924">
    <property type="entry name" value="Glu/Gln-tRNA-synth"/>
</dbReference>
<dbReference type="InterPro" id="IPR020058">
    <property type="entry name" value="Glu/Gln-tRNA-synth_Ib_cat-dom"/>
</dbReference>
<dbReference type="InterPro" id="IPR049940">
    <property type="entry name" value="GluQ/Sye"/>
</dbReference>
<dbReference type="InterPro" id="IPR033910">
    <property type="entry name" value="GluRS_core"/>
</dbReference>
<dbReference type="InterPro" id="IPR014729">
    <property type="entry name" value="Rossmann-like_a/b/a_fold"/>
</dbReference>
<dbReference type="NCBIfam" id="TIGR00464">
    <property type="entry name" value="gltX_bact"/>
    <property type="match status" value="1"/>
</dbReference>
<dbReference type="PANTHER" id="PTHR43311">
    <property type="entry name" value="GLUTAMATE--TRNA LIGASE"/>
    <property type="match status" value="1"/>
</dbReference>
<dbReference type="PANTHER" id="PTHR43311:SF2">
    <property type="entry name" value="GLUTAMATE--TRNA LIGASE, MITOCHONDRIAL-RELATED"/>
    <property type="match status" value="1"/>
</dbReference>
<dbReference type="Pfam" id="PF19269">
    <property type="entry name" value="Anticodon_2"/>
    <property type="match status" value="1"/>
</dbReference>
<dbReference type="Pfam" id="PF00749">
    <property type="entry name" value="tRNA-synt_1c"/>
    <property type="match status" value="1"/>
</dbReference>
<dbReference type="PRINTS" id="PR00987">
    <property type="entry name" value="TRNASYNTHGLU"/>
</dbReference>
<dbReference type="SUPFAM" id="SSF48163">
    <property type="entry name" value="An anticodon-binding domain of class I aminoacyl-tRNA synthetases"/>
    <property type="match status" value="1"/>
</dbReference>
<dbReference type="SUPFAM" id="SSF52374">
    <property type="entry name" value="Nucleotidylyl transferase"/>
    <property type="match status" value="1"/>
</dbReference>
<dbReference type="PROSITE" id="PS00178">
    <property type="entry name" value="AA_TRNA_LIGASE_I"/>
    <property type="match status" value="1"/>
</dbReference>
<name>SYE1_ACICJ</name>
<reference key="1">
    <citation type="submission" date="2007-05" db="EMBL/GenBank/DDBJ databases">
        <title>Complete sequence of chromosome of Acidiphilium cryptum JF-5.</title>
        <authorList>
            <consortium name="US DOE Joint Genome Institute"/>
            <person name="Copeland A."/>
            <person name="Lucas S."/>
            <person name="Lapidus A."/>
            <person name="Barry K."/>
            <person name="Detter J.C."/>
            <person name="Glavina del Rio T."/>
            <person name="Hammon N."/>
            <person name="Israni S."/>
            <person name="Dalin E."/>
            <person name="Tice H."/>
            <person name="Pitluck S."/>
            <person name="Sims D."/>
            <person name="Brettin T."/>
            <person name="Bruce D."/>
            <person name="Han C."/>
            <person name="Schmutz J."/>
            <person name="Larimer F."/>
            <person name="Land M."/>
            <person name="Hauser L."/>
            <person name="Kyrpides N."/>
            <person name="Kim E."/>
            <person name="Magnuson T."/>
            <person name="Richardson P."/>
        </authorList>
    </citation>
    <scope>NUCLEOTIDE SEQUENCE [LARGE SCALE GENOMIC DNA]</scope>
    <source>
        <strain>JF-5</strain>
    </source>
</reference>
<organism>
    <name type="scientific">Acidiphilium cryptum (strain JF-5)</name>
    <dbReference type="NCBI Taxonomy" id="349163"/>
    <lineage>
        <taxon>Bacteria</taxon>
        <taxon>Pseudomonadati</taxon>
        <taxon>Pseudomonadota</taxon>
        <taxon>Alphaproteobacteria</taxon>
        <taxon>Acetobacterales</taxon>
        <taxon>Acidocellaceae</taxon>
        <taxon>Acidiphilium</taxon>
    </lineage>
</organism>